<keyword id="KW-0997">Cell inner membrane</keyword>
<keyword id="KW-1003">Cell membrane</keyword>
<keyword id="KW-0350">Heme biosynthesis</keyword>
<keyword id="KW-0472">Membrane</keyword>
<keyword id="KW-0808">Transferase</keyword>
<keyword id="KW-0812">Transmembrane</keyword>
<keyword id="KW-1133">Transmembrane helix</keyword>
<sequence length="317" mass="33339">MTSLSNSLSADTGTTSFSPAAGGEVSDFFALLKPRVMVLVIFTALVGMVVSDATVNPVIAAISLLMIAVGAGASGCLNMWWDADIDALMTRTAKRPIPDGRIRPDEALAFGIVLSVGSVLILGLASNWLAAGLLAFTIVFYAVIYSMWLKRATAQNIVIGGAAGALPPVVGQAAVTGHVGIESLVLFAIIFIWTPPHFWALALVKSGEYARAGIPMMPNVAGPDSTRRQIIWYSLVLAPLALLPVWLGFGGWLYAVVGVLGGLGMLAGAVQVYRLREGEPERKAAMGLFAFSILYLFLLFSALLAEQGLGLFRAVAA</sequence>
<protein>
    <recommendedName>
        <fullName evidence="1">Protoheme IX farnesyltransferase</fullName>
        <ecNumber evidence="1">2.5.1.141</ecNumber>
    </recommendedName>
    <alternativeName>
        <fullName evidence="1">Heme B farnesyltransferase</fullName>
    </alternativeName>
    <alternativeName>
        <fullName evidence="1">Heme O synthase</fullName>
    </alternativeName>
</protein>
<accession>B7KVJ7</accession>
<organism>
    <name type="scientific">Methylorubrum extorquens (strain CM4 / NCIMB 13688)</name>
    <name type="common">Methylobacterium extorquens</name>
    <dbReference type="NCBI Taxonomy" id="440085"/>
    <lineage>
        <taxon>Bacteria</taxon>
        <taxon>Pseudomonadati</taxon>
        <taxon>Pseudomonadota</taxon>
        <taxon>Alphaproteobacteria</taxon>
        <taxon>Hyphomicrobiales</taxon>
        <taxon>Methylobacteriaceae</taxon>
        <taxon>Methylorubrum</taxon>
    </lineage>
</organism>
<evidence type="ECO:0000255" key="1">
    <source>
        <dbReference type="HAMAP-Rule" id="MF_00154"/>
    </source>
</evidence>
<name>COXX_METC4</name>
<feature type="chain" id="PRO_1000199654" description="Protoheme IX farnesyltransferase">
    <location>
        <begin position="1"/>
        <end position="317"/>
    </location>
</feature>
<feature type="transmembrane region" description="Helical" evidence="1">
    <location>
        <begin position="36"/>
        <end position="56"/>
    </location>
</feature>
<feature type="transmembrane region" description="Helical" evidence="1">
    <location>
        <begin position="57"/>
        <end position="77"/>
    </location>
</feature>
<feature type="transmembrane region" description="Helical" evidence="1">
    <location>
        <begin position="108"/>
        <end position="128"/>
    </location>
</feature>
<feature type="transmembrane region" description="Helical" evidence="1">
    <location>
        <begin position="129"/>
        <end position="149"/>
    </location>
</feature>
<feature type="transmembrane region" description="Helical" evidence="1">
    <location>
        <begin position="157"/>
        <end position="177"/>
    </location>
</feature>
<feature type="transmembrane region" description="Helical" evidence="1">
    <location>
        <begin position="184"/>
        <end position="204"/>
    </location>
</feature>
<feature type="transmembrane region" description="Helical" evidence="1">
    <location>
        <begin position="230"/>
        <end position="247"/>
    </location>
</feature>
<feature type="transmembrane region" description="Helical" evidence="1">
    <location>
        <begin position="251"/>
        <end position="273"/>
    </location>
</feature>
<feature type="transmembrane region" description="Helical" evidence="1">
    <location>
        <begin position="284"/>
        <end position="304"/>
    </location>
</feature>
<comment type="function">
    <text evidence="1">Converts heme B (protoheme IX) to heme O by substitution of the vinyl group on carbon 2 of heme B porphyrin ring with a hydroxyethyl farnesyl side group.</text>
</comment>
<comment type="catalytic activity">
    <reaction evidence="1">
        <text>heme b + (2E,6E)-farnesyl diphosphate + H2O = Fe(II)-heme o + diphosphate</text>
        <dbReference type="Rhea" id="RHEA:28070"/>
        <dbReference type="ChEBI" id="CHEBI:15377"/>
        <dbReference type="ChEBI" id="CHEBI:33019"/>
        <dbReference type="ChEBI" id="CHEBI:60344"/>
        <dbReference type="ChEBI" id="CHEBI:60530"/>
        <dbReference type="ChEBI" id="CHEBI:175763"/>
        <dbReference type="EC" id="2.5.1.141"/>
    </reaction>
</comment>
<comment type="pathway">
    <text evidence="1">Porphyrin-containing compound metabolism; heme O biosynthesis; heme O from protoheme: step 1/1.</text>
</comment>
<comment type="subcellular location">
    <subcellularLocation>
        <location evidence="1">Cell inner membrane</location>
        <topology evidence="1">Multi-pass membrane protein</topology>
    </subcellularLocation>
</comment>
<comment type="miscellaneous">
    <text evidence="1">Carbon 2 of the heme B porphyrin ring is defined according to the Fischer nomenclature.</text>
</comment>
<comment type="similarity">
    <text evidence="1">Belongs to the UbiA prenyltransferase family. Protoheme IX farnesyltransferase subfamily.</text>
</comment>
<gene>
    <name evidence="1" type="primary">ctaB</name>
    <name type="ordered locus">Mchl_3585</name>
</gene>
<dbReference type="EC" id="2.5.1.141" evidence="1"/>
<dbReference type="EMBL" id="CP001298">
    <property type="protein sequence ID" value="ACK84405.1"/>
    <property type="molecule type" value="Genomic_DNA"/>
</dbReference>
<dbReference type="RefSeq" id="WP_004446925.1">
    <property type="nucleotide sequence ID" value="NC_011757.1"/>
</dbReference>
<dbReference type="SMR" id="B7KVJ7"/>
<dbReference type="GeneID" id="72990903"/>
<dbReference type="KEGG" id="mch:Mchl_3585"/>
<dbReference type="HOGENOM" id="CLU_029631_0_2_5"/>
<dbReference type="UniPathway" id="UPA00834">
    <property type="reaction ID" value="UER00712"/>
</dbReference>
<dbReference type="Proteomes" id="UP000002385">
    <property type="component" value="Chromosome"/>
</dbReference>
<dbReference type="GO" id="GO:0005886">
    <property type="term" value="C:plasma membrane"/>
    <property type="evidence" value="ECO:0007669"/>
    <property type="project" value="UniProtKB-SubCell"/>
</dbReference>
<dbReference type="GO" id="GO:0008495">
    <property type="term" value="F:protoheme IX farnesyltransferase activity"/>
    <property type="evidence" value="ECO:0007669"/>
    <property type="project" value="UniProtKB-UniRule"/>
</dbReference>
<dbReference type="GO" id="GO:0048034">
    <property type="term" value="P:heme O biosynthetic process"/>
    <property type="evidence" value="ECO:0007669"/>
    <property type="project" value="UniProtKB-UniRule"/>
</dbReference>
<dbReference type="CDD" id="cd13957">
    <property type="entry name" value="PT_UbiA_Cox10"/>
    <property type="match status" value="1"/>
</dbReference>
<dbReference type="Gene3D" id="1.10.357.140">
    <property type="entry name" value="UbiA prenyltransferase"/>
    <property type="match status" value="1"/>
</dbReference>
<dbReference type="HAMAP" id="MF_00154">
    <property type="entry name" value="CyoE_CtaB"/>
    <property type="match status" value="1"/>
</dbReference>
<dbReference type="InterPro" id="IPR006369">
    <property type="entry name" value="Protohaem_IX_farnesylTrfase"/>
</dbReference>
<dbReference type="InterPro" id="IPR000537">
    <property type="entry name" value="UbiA_prenyltransferase"/>
</dbReference>
<dbReference type="InterPro" id="IPR030470">
    <property type="entry name" value="UbiA_prenylTrfase_CS"/>
</dbReference>
<dbReference type="InterPro" id="IPR044878">
    <property type="entry name" value="UbiA_sf"/>
</dbReference>
<dbReference type="NCBIfam" id="TIGR01473">
    <property type="entry name" value="cyoE_ctaB"/>
    <property type="match status" value="1"/>
</dbReference>
<dbReference type="NCBIfam" id="NF003349">
    <property type="entry name" value="PRK04375.1-2"/>
    <property type="match status" value="1"/>
</dbReference>
<dbReference type="PANTHER" id="PTHR43448:SF7">
    <property type="entry name" value="4-HYDROXYBENZOATE SOLANESYLTRANSFERASE"/>
    <property type="match status" value="1"/>
</dbReference>
<dbReference type="PANTHER" id="PTHR43448">
    <property type="entry name" value="PROTOHEME IX FARNESYLTRANSFERASE, MITOCHONDRIAL"/>
    <property type="match status" value="1"/>
</dbReference>
<dbReference type="Pfam" id="PF01040">
    <property type="entry name" value="UbiA"/>
    <property type="match status" value="1"/>
</dbReference>
<dbReference type="PROSITE" id="PS00943">
    <property type="entry name" value="UBIA"/>
    <property type="match status" value="1"/>
</dbReference>
<reference key="1">
    <citation type="submission" date="2008-12" db="EMBL/GenBank/DDBJ databases">
        <title>Complete sequence of chromosome of Methylobacterium chloromethanicum CM4.</title>
        <authorList>
            <consortium name="US DOE Joint Genome Institute"/>
            <person name="Lucas S."/>
            <person name="Copeland A."/>
            <person name="Lapidus A."/>
            <person name="Glavina del Rio T."/>
            <person name="Dalin E."/>
            <person name="Tice H."/>
            <person name="Bruce D."/>
            <person name="Goodwin L."/>
            <person name="Pitluck S."/>
            <person name="Chertkov O."/>
            <person name="Brettin T."/>
            <person name="Detter J.C."/>
            <person name="Han C."/>
            <person name="Larimer F."/>
            <person name="Land M."/>
            <person name="Hauser L."/>
            <person name="Kyrpides N."/>
            <person name="Mikhailova N."/>
            <person name="Marx C."/>
            <person name="Richardson P."/>
        </authorList>
    </citation>
    <scope>NUCLEOTIDE SEQUENCE [LARGE SCALE GENOMIC DNA]</scope>
    <source>
        <strain>CM4 / NCIMB 13688</strain>
    </source>
</reference>
<proteinExistence type="inferred from homology"/>